<feature type="chain" id="PRO_0000331368" description="DNA repair endonuclease XPF">
    <location>
        <begin position="1"/>
        <end position="964"/>
    </location>
</feature>
<feature type="domain" description="ERCC4">
    <location>
        <begin position="739"/>
        <end position="819"/>
    </location>
</feature>
<feature type="region of interest" description="Disordered" evidence="2">
    <location>
        <begin position="360"/>
        <end position="379"/>
    </location>
</feature>
<feature type="region of interest" description="Disordered" evidence="2">
    <location>
        <begin position="459"/>
        <end position="529"/>
    </location>
</feature>
<feature type="region of interest" description="Disordered" evidence="2">
    <location>
        <begin position="545"/>
        <end position="571"/>
    </location>
</feature>
<feature type="compositionally biased region" description="Low complexity" evidence="2">
    <location>
        <begin position="462"/>
        <end position="482"/>
    </location>
</feature>
<feature type="compositionally biased region" description="Polar residues" evidence="2">
    <location>
        <begin position="483"/>
        <end position="492"/>
    </location>
</feature>
<keyword id="KW-0227">DNA damage</keyword>
<keyword id="KW-0234">DNA repair</keyword>
<keyword id="KW-0238">DNA-binding</keyword>
<keyword id="KW-0255">Endonuclease</keyword>
<keyword id="KW-0378">Hydrolase</keyword>
<keyword id="KW-0460">Magnesium</keyword>
<keyword id="KW-0540">Nuclease</keyword>
<keyword id="KW-0539">Nucleus</keyword>
<keyword id="KW-1185">Reference proteome</keyword>
<name>XPF_DICDI</name>
<accession>Q54PN5</accession>
<dbReference type="EC" id="3.1.-.-"/>
<dbReference type="EMBL" id="AAFI02000064">
    <property type="protein sequence ID" value="EAL65258.1"/>
    <property type="molecule type" value="Genomic_DNA"/>
</dbReference>
<dbReference type="RefSeq" id="XP_638619.1">
    <property type="nucleotide sequence ID" value="XM_633527.1"/>
</dbReference>
<dbReference type="SMR" id="Q54PN5"/>
<dbReference type="FunCoup" id="Q54PN5">
    <property type="interactions" value="859"/>
</dbReference>
<dbReference type="STRING" id="44689.Q54PN5"/>
<dbReference type="PaxDb" id="44689-DDB0232364"/>
<dbReference type="EnsemblProtists" id="EAL65258">
    <property type="protein sequence ID" value="EAL65258"/>
    <property type="gene ID" value="DDB_G0284419"/>
</dbReference>
<dbReference type="GeneID" id="8624590"/>
<dbReference type="KEGG" id="ddi:DDB_G0284419"/>
<dbReference type="dictyBase" id="DDB_G0284419">
    <property type="gene designation" value="xpf"/>
</dbReference>
<dbReference type="VEuPathDB" id="AmoebaDB:DDB_G0284419"/>
<dbReference type="eggNOG" id="KOG0442">
    <property type="taxonomic scope" value="Eukaryota"/>
</dbReference>
<dbReference type="HOGENOM" id="CLU_002265_2_0_1"/>
<dbReference type="InParanoid" id="Q54PN5"/>
<dbReference type="OMA" id="THILDIM"/>
<dbReference type="PhylomeDB" id="Q54PN5"/>
<dbReference type="Reactome" id="R-DDI-5696395">
    <property type="pathway name" value="Formation of Incision Complex in GG-NER"/>
</dbReference>
<dbReference type="Reactome" id="R-DDI-6782135">
    <property type="pathway name" value="Dual incision in TC-NER"/>
</dbReference>
<dbReference type="PRO" id="PR:Q54PN5"/>
<dbReference type="Proteomes" id="UP000002195">
    <property type="component" value="Chromosome 4"/>
</dbReference>
<dbReference type="GO" id="GO:0000110">
    <property type="term" value="C:nucleotide-excision repair factor 1 complex"/>
    <property type="evidence" value="ECO:0000250"/>
    <property type="project" value="dictyBase"/>
</dbReference>
<dbReference type="GO" id="GO:0003684">
    <property type="term" value="F:damaged DNA binding"/>
    <property type="evidence" value="ECO:0000318"/>
    <property type="project" value="GO_Central"/>
</dbReference>
<dbReference type="GO" id="GO:0004519">
    <property type="term" value="F:endonuclease activity"/>
    <property type="evidence" value="ECO:0000304"/>
    <property type="project" value="dictyBase"/>
</dbReference>
<dbReference type="GO" id="GO:0003697">
    <property type="term" value="F:single-stranded DNA binding"/>
    <property type="evidence" value="ECO:0000318"/>
    <property type="project" value="GO_Central"/>
</dbReference>
<dbReference type="GO" id="GO:0000014">
    <property type="term" value="F:single-stranded DNA endodeoxyribonuclease activity"/>
    <property type="evidence" value="ECO:0000250"/>
    <property type="project" value="dictyBase"/>
</dbReference>
<dbReference type="GO" id="GO:0006974">
    <property type="term" value="P:DNA damage response"/>
    <property type="evidence" value="ECO:0000315"/>
    <property type="project" value="dictyBase"/>
</dbReference>
<dbReference type="GO" id="GO:0000724">
    <property type="term" value="P:double-strand break repair via homologous recombination"/>
    <property type="evidence" value="ECO:0000315"/>
    <property type="project" value="dictyBase"/>
</dbReference>
<dbReference type="GO" id="GO:0006289">
    <property type="term" value="P:nucleotide-excision repair"/>
    <property type="evidence" value="ECO:0000250"/>
    <property type="project" value="dictyBase"/>
</dbReference>
<dbReference type="GO" id="GO:1901255">
    <property type="term" value="P:nucleotide-excision repair involved in interstrand cross-link repair"/>
    <property type="evidence" value="ECO:0000318"/>
    <property type="project" value="GO_Central"/>
</dbReference>
<dbReference type="GO" id="GO:0000712">
    <property type="term" value="P:resolution of meiotic recombination intermediates"/>
    <property type="evidence" value="ECO:0000318"/>
    <property type="project" value="GO_Central"/>
</dbReference>
<dbReference type="CDD" id="cd20078">
    <property type="entry name" value="XPF_nuclease_XPF_euk"/>
    <property type="match status" value="1"/>
</dbReference>
<dbReference type="FunFam" id="3.40.50.10130:FF:000002">
    <property type="entry name" value="DNA repair endonuclease XPF"/>
    <property type="match status" value="1"/>
</dbReference>
<dbReference type="Gene3D" id="3.40.50.10130">
    <property type="match status" value="1"/>
</dbReference>
<dbReference type="Gene3D" id="1.10.150.20">
    <property type="entry name" value="5' to 3' exonuclease, C-terminal subdomain"/>
    <property type="match status" value="1"/>
</dbReference>
<dbReference type="InterPro" id="IPR006166">
    <property type="entry name" value="ERCC4_domain"/>
</dbReference>
<dbReference type="InterPro" id="IPR011335">
    <property type="entry name" value="Restrct_endonuc-II-like"/>
</dbReference>
<dbReference type="InterPro" id="IPR010994">
    <property type="entry name" value="RuvA_2-like"/>
</dbReference>
<dbReference type="InterPro" id="IPR047520">
    <property type="entry name" value="XPF_nuclease"/>
</dbReference>
<dbReference type="PANTHER" id="PTHR10150">
    <property type="entry name" value="DNA REPAIR ENDONUCLEASE XPF"/>
    <property type="match status" value="1"/>
</dbReference>
<dbReference type="PANTHER" id="PTHR10150:SF0">
    <property type="entry name" value="DNA REPAIR ENDONUCLEASE XPF"/>
    <property type="match status" value="1"/>
</dbReference>
<dbReference type="Pfam" id="PF02732">
    <property type="entry name" value="ERCC4"/>
    <property type="match status" value="1"/>
</dbReference>
<dbReference type="SMART" id="SM00891">
    <property type="entry name" value="ERCC4"/>
    <property type="match status" value="1"/>
</dbReference>
<dbReference type="SUPFAM" id="SSF52980">
    <property type="entry name" value="Restriction endonuclease-like"/>
    <property type="match status" value="1"/>
</dbReference>
<dbReference type="SUPFAM" id="SSF47781">
    <property type="entry name" value="RuvA domain 2-like"/>
    <property type="match status" value="1"/>
</dbReference>
<sequence>MSLEFYKQIFEDCLNDDGLVVMGSGLGIHNIILGFLKFYSDTDDLVLFLDCQSNESLQNSYLFYHERLLNFGIKYSNLPTMVNVETVSSSTKTNMYSKGGVYFGASSIFVLDYLTKRMPCNLVSGIIIQNAHRITDTSIEYLLIKLFRQNNKKGFIKAFTTEPSLLVDEIGKLQRTMKYLHLKKLFLWPRFHQHISLILDKHPPDLVELSIGMTNSMKRIEESLHLNTQRCISSLIAINKLPRLNGGNGGNDSDSFEQILKQQLKPMWSKLNLHSKQLVSSIKLLNQLKNNLLVYDCVTFYSLLLYIQASSDSLKEGLHTNSNYVDEVQPWLESKEAQNLFSASQERVYRFKKLNSLKSPPKKLKTINNDSSSSSSSSNLEKILTLEDNPKWNVLYQILQEIEEDKEKQGTILIFVKDETTVNQLSTYLDYGGYSFLLGKYEKLCSNQQYLDELRKKKEENNNNNNSNNNNNNNNNNNNNNSVKSLSSNDNGGYSRYRRTKNFKDNRKQQIIETSKKKKGKGGTNDQNLFNMGIQLVDGHNKLNIPNPKFINQDGSGGGGDNGDENNNNNNNLNINDGLTIASMNEEINGLNDFYELLSPPYIVIHPISKSLTILDEIRPTFIIVYDPDISITRQIEVYKAENPGTPVRLYFMTYSDSSEEYQYISKLQREKSSFEKLIREKTNLIIDTEQEGKIQLVDNSKLELLDDMKSTRNSRLGGLMKNFDSIQQQQQQQQQKKTIIIDSHEFKSSLPVVLHNNGYEIIPLRLEVGDFVLSPIHCIERKSVSDLIGSFNSGRLFTQIEAMNRIYKNPILLIEFDPNQPFYLVAPDELQKDYLSPFSLPSKLVFLTKTFPRLRVIWSRSYYCTTKIYDQIKDGYPEPDPSMVNVIPEVNDDQNYNFNAQDVLRTMPGVNDKNINLIMDNVDDLYHLSKLSLSEFSTIMNDSVNNNKNATLLFNFFNNQLNQ</sequence>
<comment type="function">
    <text evidence="1">Structure-specific DNA repair endonuclease responsible for the 5-prime incision during DNA repair. Involved in homologous recombination that assists in removing interstrand cross-link (By similarity).</text>
</comment>
<comment type="cofactor">
    <cofactor evidence="1">
        <name>Mg(2+)</name>
        <dbReference type="ChEBI" id="CHEBI:18420"/>
    </cofactor>
</comment>
<comment type="subunit">
    <text evidence="1">Heterodimer composed of ercc1 and xpf/ercc4.</text>
</comment>
<comment type="subcellular location">
    <subcellularLocation>
        <location evidence="1">Nucleus</location>
    </subcellularLocation>
</comment>
<comment type="similarity">
    <text evidence="3">Belongs to the XPF family.</text>
</comment>
<protein>
    <recommendedName>
        <fullName>DNA repair endonuclease XPF</fullName>
        <ecNumber>3.1.-.-</ecNumber>
    </recommendedName>
    <alternativeName>
        <fullName>DNA excision repair protein ERCC-4</fullName>
    </alternativeName>
</protein>
<organism>
    <name type="scientific">Dictyostelium discoideum</name>
    <name type="common">Social amoeba</name>
    <dbReference type="NCBI Taxonomy" id="44689"/>
    <lineage>
        <taxon>Eukaryota</taxon>
        <taxon>Amoebozoa</taxon>
        <taxon>Evosea</taxon>
        <taxon>Eumycetozoa</taxon>
        <taxon>Dictyostelia</taxon>
        <taxon>Dictyosteliales</taxon>
        <taxon>Dictyosteliaceae</taxon>
        <taxon>Dictyostelium</taxon>
    </lineage>
</organism>
<evidence type="ECO:0000250" key="1"/>
<evidence type="ECO:0000256" key="2">
    <source>
        <dbReference type="SAM" id="MobiDB-lite"/>
    </source>
</evidence>
<evidence type="ECO:0000305" key="3"/>
<gene>
    <name type="primary">ercc4</name>
    <name type="ORF">DDB_G0284419</name>
</gene>
<proteinExistence type="inferred from homology"/>
<reference key="1">
    <citation type="journal article" date="2005" name="Nature">
        <title>The genome of the social amoeba Dictyostelium discoideum.</title>
        <authorList>
            <person name="Eichinger L."/>
            <person name="Pachebat J.A."/>
            <person name="Gloeckner G."/>
            <person name="Rajandream M.A."/>
            <person name="Sucgang R."/>
            <person name="Berriman M."/>
            <person name="Song J."/>
            <person name="Olsen R."/>
            <person name="Szafranski K."/>
            <person name="Xu Q."/>
            <person name="Tunggal B."/>
            <person name="Kummerfeld S."/>
            <person name="Madera M."/>
            <person name="Konfortov B.A."/>
            <person name="Rivero F."/>
            <person name="Bankier A.T."/>
            <person name="Lehmann R."/>
            <person name="Hamlin N."/>
            <person name="Davies R."/>
            <person name="Gaudet P."/>
            <person name="Fey P."/>
            <person name="Pilcher K."/>
            <person name="Chen G."/>
            <person name="Saunders D."/>
            <person name="Sodergren E.J."/>
            <person name="Davis P."/>
            <person name="Kerhornou A."/>
            <person name="Nie X."/>
            <person name="Hall N."/>
            <person name="Anjard C."/>
            <person name="Hemphill L."/>
            <person name="Bason N."/>
            <person name="Farbrother P."/>
            <person name="Desany B."/>
            <person name="Just E."/>
            <person name="Morio T."/>
            <person name="Rost R."/>
            <person name="Churcher C.M."/>
            <person name="Cooper J."/>
            <person name="Haydock S."/>
            <person name="van Driessche N."/>
            <person name="Cronin A."/>
            <person name="Goodhead I."/>
            <person name="Muzny D.M."/>
            <person name="Mourier T."/>
            <person name="Pain A."/>
            <person name="Lu M."/>
            <person name="Harper D."/>
            <person name="Lindsay R."/>
            <person name="Hauser H."/>
            <person name="James K.D."/>
            <person name="Quiles M."/>
            <person name="Madan Babu M."/>
            <person name="Saito T."/>
            <person name="Buchrieser C."/>
            <person name="Wardroper A."/>
            <person name="Felder M."/>
            <person name="Thangavelu M."/>
            <person name="Johnson D."/>
            <person name="Knights A."/>
            <person name="Loulseged H."/>
            <person name="Mungall K.L."/>
            <person name="Oliver K."/>
            <person name="Price C."/>
            <person name="Quail M.A."/>
            <person name="Urushihara H."/>
            <person name="Hernandez J."/>
            <person name="Rabbinowitsch E."/>
            <person name="Steffen D."/>
            <person name="Sanders M."/>
            <person name="Ma J."/>
            <person name="Kohara Y."/>
            <person name="Sharp S."/>
            <person name="Simmonds M.N."/>
            <person name="Spiegler S."/>
            <person name="Tivey A."/>
            <person name="Sugano S."/>
            <person name="White B."/>
            <person name="Walker D."/>
            <person name="Woodward J.R."/>
            <person name="Winckler T."/>
            <person name="Tanaka Y."/>
            <person name="Shaulsky G."/>
            <person name="Schleicher M."/>
            <person name="Weinstock G.M."/>
            <person name="Rosenthal A."/>
            <person name="Cox E.C."/>
            <person name="Chisholm R.L."/>
            <person name="Gibbs R.A."/>
            <person name="Loomis W.F."/>
            <person name="Platzer M."/>
            <person name="Kay R.R."/>
            <person name="Williams J.G."/>
            <person name="Dear P.H."/>
            <person name="Noegel A.A."/>
            <person name="Barrell B.G."/>
            <person name="Kuspa A."/>
        </authorList>
    </citation>
    <scope>NUCLEOTIDE SEQUENCE [LARGE SCALE GENOMIC DNA]</scope>
    <source>
        <strain>AX4</strain>
    </source>
</reference>